<proteinExistence type="inferred from homology"/>
<gene>
    <name type="primary">CMC4</name>
    <name type="ordered locus">KLTH0H02552g</name>
</gene>
<reference key="1">
    <citation type="journal article" date="2009" name="Genome Res.">
        <title>Comparative genomics of protoploid Saccharomycetaceae.</title>
        <authorList>
            <consortium name="The Genolevures Consortium"/>
            <person name="Souciet J.-L."/>
            <person name="Dujon B."/>
            <person name="Gaillardin C."/>
            <person name="Johnston M."/>
            <person name="Baret P.V."/>
            <person name="Cliften P."/>
            <person name="Sherman D.J."/>
            <person name="Weissenbach J."/>
            <person name="Westhof E."/>
            <person name="Wincker P."/>
            <person name="Jubin C."/>
            <person name="Poulain J."/>
            <person name="Barbe V."/>
            <person name="Segurens B."/>
            <person name="Artiguenave F."/>
            <person name="Anthouard V."/>
            <person name="Vacherie B."/>
            <person name="Val M.-E."/>
            <person name="Fulton R.S."/>
            <person name="Minx P."/>
            <person name="Wilson R."/>
            <person name="Durrens P."/>
            <person name="Jean G."/>
            <person name="Marck C."/>
            <person name="Martin T."/>
            <person name="Nikolski M."/>
            <person name="Rolland T."/>
            <person name="Seret M.-L."/>
            <person name="Casaregola S."/>
            <person name="Despons L."/>
            <person name="Fairhead C."/>
            <person name="Fischer G."/>
            <person name="Lafontaine I."/>
            <person name="Leh V."/>
            <person name="Lemaire M."/>
            <person name="de Montigny J."/>
            <person name="Neuveglise C."/>
            <person name="Thierry A."/>
            <person name="Blanc-Lenfle I."/>
            <person name="Bleykasten C."/>
            <person name="Diffels J."/>
            <person name="Fritsch E."/>
            <person name="Frangeul L."/>
            <person name="Goeffon A."/>
            <person name="Jauniaux N."/>
            <person name="Kachouri-Lafond R."/>
            <person name="Payen C."/>
            <person name="Potier S."/>
            <person name="Pribylova L."/>
            <person name="Ozanne C."/>
            <person name="Richard G.-F."/>
            <person name="Sacerdot C."/>
            <person name="Straub M.-L."/>
            <person name="Talla E."/>
        </authorList>
    </citation>
    <scope>NUCLEOTIDE SEQUENCE [LARGE SCALE GENOMIC DNA]</scope>
    <source>
        <strain>ATCC 56472 / CBS 6340 / NRRL Y-8284</strain>
    </source>
</reference>
<protein>
    <recommendedName>
        <fullName>Cx9C motif-containing protein 4, mitochondrial</fullName>
    </recommendedName>
</protein>
<keyword id="KW-1015">Disulfide bond</keyword>
<keyword id="KW-0496">Mitochondrion</keyword>
<keyword id="KW-1185">Reference proteome</keyword>
<keyword id="KW-0677">Repeat</keyword>
<dbReference type="EMBL" id="CU928180">
    <property type="protein sequence ID" value="CAR30129.1"/>
    <property type="molecule type" value="Genomic_DNA"/>
</dbReference>
<dbReference type="RefSeq" id="XP_002555991.1">
    <property type="nucleotide sequence ID" value="XM_002555945.1"/>
</dbReference>
<dbReference type="SMR" id="C5E268"/>
<dbReference type="FunCoup" id="C5E268">
    <property type="interactions" value="109"/>
</dbReference>
<dbReference type="STRING" id="559295.C5E268"/>
<dbReference type="GeneID" id="8294304"/>
<dbReference type="KEGG" id="lth:KLTH0H02552g"/>
<dbReference type="eggNOG" id="ENOG502S7M4">
    <property type="taxonomic scope" value="Eukaryota"/>
</dbReference>
<dbReference type="HOGENOM" id="CLU_177210_0_1_1"/>
<dbReference type="InParanoid" id="C5E268"/>
<dbReference type="OMA" id="YQEEKCQ"/>
<dbReference type="OrthoDB" id="13601at2759"/>
<dbReference type="Proteomes" id="UP000002036">
    <property type="component" value="Chromosome H"/>
</dbReference>
<dbReference type="GO" id="GO:0005758">
    <property type="term" value="C:mitochondrial intermembrane space"/>
    <property type="evidence" value="ECO:0007669"/>
    <property type="project" value="UniProtKB-SubCell"/>
</dbReference>
<dbReference type="FunFam" id="1.10.287.1130:FF:000008">
    <property type="entry name" value="Cx9C motif-containing protein 4, mitochondrial"/>
    <property type="match status" value="1"/>
</dbReference>
<dbReference type="Gene3D" id="1.10.287.1130">
    <property type="entry name" value="CytochromE C oxidase copper chaperone"/>
    <property type="match status" value="1"/>
</dbReference>
<dbReference type="InterPro" id="IPR027179">
    <property type="entry name" value="CMC4"/>
</dbReference>
<dbReference type="InterPro" id="IPR009069">
    <property type="entry name" value="Cys_alpha_HP_mot_SF"/>
</dbReference>
<dbReference type="PANTHER" id="PTHR15590">
    <property type="entry name" value="CX9C MOTIF-CONTAINING PROTEIN 4"/>
    <property type="match status" value="1"/>
</dbReference>
<dbReference type="PANTHER" id="PTHR15590:SF0">
    <property type="entry name" value="CX9C MOTIF-CONTAINING PROTEIN 4"/>
    <property type="match status" value="1"/>
</dbReference>
<dbReference type="Pfam" id="PF08991">
    <property type="entry name" value="CMC4"/>
    <property type="match status" value="1"/>
</dbReference>
<dbReference type="SUPFAM" id="SSF47072">
    <property type="entry name" value="Cysteine alpha-hairpin motif"/>
    <property type="match status" value="1"/>
</dbReference>
<dbReference type="PROSITE" id="PS51808">
    <property type="entry name" value="CHCH"/>
    <property type="match status" value="1"/>
</dbReference>
<evidence type="ECO:0000250" key="1"/>
<evidence type="ECO:0000255" key="2">
    <source>
        <dbReference type="PROSITE-ProRule" id="PRU01150"/>
    </source>
</evidence>
<evidence type="ECO:0000305" key="3"/>
<feature type="chain" id="PRO_0000408575" description="Cx9C motif-containing protein 4, mitochondrial">
    <location>
        <begin position="1"/>
        <end position="77"/>
    </location>
</feature>
<feature type="domain" description="CHCH" evidence="2">
    <location>
        <begin position="2"/>
        <end position="44"/>
    </location>
</feature>
<feature type="short sequence motif" description="Cx9C motif 1" evidence="2">
    <location>
        <begin position="5"/>
        <end position="15"/>
    </location>
</feature>
<feature type="short sequence motif" description="Cx9C motif 2" evidence="2">
    <location>
        <begin position="26"/>
        <end position="36"/>
    </location>
</feature>
<feature type="disulfide bond" evidence="2">
    <location>
        <begin position="5"/>
        <end position="36"/>
    </location>
</feature>
<feature type="disulfide bond" evidence="2">
    <location>
        <begin position="15"/>
        <end position="26"/>
    </location>
</feature>
<organism>
    <name type="scientific">Lachancea thermotolerans (strain ATCC 56472 / CBS 6340 / NRRL Y-8284)</name>
    <name type="common">Yeast</name>
    <name type="synonym">Kluyveromyces thermotolerans</name>
    <dbReference type="NCBI Taxonomy" id="559295"/>
    <lineage>
        <taxon>Eukaryota</taxon>
        <taxon>Fungi</taxon>
        <taxon>Dikarya</taxon>
        <taxon>Ascomycota</taxon>
        <taxon>Saccharomycotina</taxon>
        <taxon>Saccharomycetes</taxon>
        <taxon>Saccharomycetales</taxon>
        <taxon>Saccharomycetaceae</taxon>
        <taxon>Lachancea</taxon>
    </lineage>
</organism>
<sequence length="77" mass="8539">MTDPCKPQACAIQGCLTKTGFDESKCSHLIDSLYECCSKFYNERGADARTPCCPVPSLLRLKLEQRACGPLDAKRVR</sequence>
<comment type="subcellular location">
    <subcellularLocation>
        <location evidence="1">Mitochondrion intermembrane space</location>
    </subcellularLocation>
    <text evidence="1">Imported into the mitochondria via the mitochondrial disulfide relay system.</text>
</comment>
<comment type="domain">
    <text evidence="1">The twin Cx9C motifs are involved in the recognition by the mitochondrial disulfide relay system.</text>
</comment>
<comment type="similarity">
    <text evidence="3">Belongs to the CMC4 family.</text>
</comment>
<accession>C5E268</accession>
<name>CMC4_LACTC</name>